<protein>
    <recommendedName>
        <fullName evidence="1">Potassium-transporting ATPase potassium-binding subunit</fullName>
    </recommendedName>
    <alternativeName>
        <fullName evidence="1">ATP phosphohydrolase [potassium-transporting] A chain</fullName>
    </alternativeName>
    <alternativeName>
        <fullName evidence="1">Potassium-binding and translocating subunit A</fullName>
    </alternativeName>
    <alternativeName>
        <fullName evidence="1">Potassium-translocating ATPase A chain</fullName>
    </alternativeName>
</protein>
<reference key="1">
    <citation type="journal article" date="2011" name="J. Bacteriol.">
        <title>Comparative genomics of 28 Salmonella enterica isolates: evidence for CRISPR-mediated adaptive sublineage evolution.</title>
        <authorList>
            <person name="Fricke W.F."/>
            <person name="Mammel M.K."/>
            <person name="McDermott P.F."/>
            <person name="Tartera C."/>
            <person name="White D.G."/>
            <person name="Leclerc J.E."/>
            <person name="Ravel J."/>
            <person name="Cebula T.A."/>
        </authorList>
    </citation>
    <scope>NUCLEOTIDE SEQUENCE [LARGE SCALE GENOMIC DNA]</scope>
    <source>
        <strain>SL254</strain>
    </source>
</reference>
<comment type="function">
    <text evidence="1">Part of the high-affinity ATP-driven potassium transport (or Kdp) system, which catalyzes the hydrolysis of ATP coupled with the electrogenic transport of potassium into the cytoplasm. This subunit binds the periplasmic potassium ions and delivers the ions to the membrane domain of KdpB through an intramembrane tunnel.</text>
</comment>
<comment type="subunit">
    <text evidence="1">The system is composed of three essential subunits: KdpA, KdpB and KdpC.</text>
</comment>
<comment type="subcellular location">
    <subcellularLocation>
        <location evidence="1">Cell inner membrane</location>
        <topology evidence="1">Multi-pass membrane protein</topology>
    </subcellularLocation>
</comment>
<comment type="similarity">
    <text evidence="1">Belongs to the KdpA family.</text>
</comment>
<proteinExistence type="inferred from homology"/>
<evidence type="ECO:0000255" key="1">
    <source>
        <dbReference type="HAMAP-Rule" id="MF_00275"/>
    </source>
</evidence>
<keyword id="KW-0997">Cell inner membrane</keyword>
<keyword id="KW-1003">Cell membrane</keyword>
<keyword id="KW-0406">Ion transport</keyword>
<keyword id="KW-0472">Membrane</keyword>
<keyword id="KW-0630">Potassium</keyword>
<keyword id="KW-0633">Potassium transport</keyword>
<keyword id="KW-0812">Transmembrane</keyword>
<keyword id="KW-1133">Transmembrane helix</keyword>
<keyword id="KW-0813">Transport</keyword>
<accession>B4SZB2</accession>
<feature type="chain" id="PRO_1000114703" description="Potassium-transporting ATPase potassium-binding subunit">
    <location>
        <begin position="1"/>
        <end position="559"/>
    </location>
</feature>
<feature type="transmembrane region" description="Helical" evidence="1">
    <location>
        <begin position="5"/>
        <end position="25"/>
    </location>
</feature>
<feature type="transmembrane region" description="Helical" evidence="1">
    <location>
        <begin position="27"/>
        <end position="47"/>
    </location>
</feature>
<feature type="transmembrane region" description="Helical" evidence="1">
    <location>
        <begin position="63"/>
        <end position="83"/>
    </location>
</feature>
<feature type="transmembrane region" description="Helical" evidence="1">
    <location>
        <begin position="132"/>
        <end position="152"/>
    </location>
</feature>
<feature type="transmembrane region" description="Helical" evidence="1">
    <location>
        <begin position="170"/>
        <end position="190"/>
    </location>
</feature>
<feature type="transmembrane region" description="Helical" evidence="1">
    <location>
        <begin position="253"/>
        <end position="273"/>
    </location>
</feature>
<feature type="transmembrane region" description="Helical" evidence="1">
    <location>
        <begin position="283"/>
        <end position="303"/>
    </location>
</feature>
<feature type="transmembrane region" description="Helical" evidence="1">
    <location>
        <begin position="327"/>
        <end position="347"/>
    </location>
</feature>
<feature type="transmembrane region" description="Helical" evidence="1">
    <location>
        <begin position="356"/>
        <end position="376"/>
    </location>
</feature>
<feature type="transmembrane region" description="Helical" evidence="1">
    <location>
        <begin position="379"/>
        <end position="399"/>
    </location>
</feature>
<feature type="transmembrane region" description="Helical" evidence="1">
    <location>
        <begin position="416"/>
        <end position="436"/>
    </location>
</feature>
<feature type="transmembrane region" description="Helical" evidence="1">
    <location>
        <begin position="484"/>
        <end position="504"/>
    </location>
</feature>
<feature type="transmembrane region" description="Helical" evidence="1">
    <location>
        <begin position="524"/>
        <end position="544"/>
    </location>
</feature>
<organism>
    <name type="scientific">Salmonella newport (strain SL254)</name>
    <dbReference type="NCBI Taxonomy" id="423368"/>
    <lineage>
        <taxon>Bacteria</taxon>
        <taxon>Pseudomonadati</taxon>
        <taxon>Pseudomonadota</taxon>
        <taxon>Gammaproteobacteria</taxon>
        <taxon>Enterobacterales</taxon>
        <taxon>Enterobacteriaceae</taxon>
        <taxon>Salmonella</taxon>
    </lineage>
</organism>
<name>KDPA_SALNS</name>
<sequence>MAAQGFLLNASFLLILLVLAKPLGSGLARLIAAVPLPGVAGVERILWRTLGITDHEMNWRQYLLALLTLNLLGLGILFCLLFWQEWLPLNPQRLPGLSWDLALNTAVSFVTNTNWQAYSGESTLSYFSQMAGLTVQNFLSAATGIAVVFALIRAFTRQNVHTLGNAWQDLVRITLWILFPVALIIALFFIQQGVPQNLSAYQPITTLEGAKQLLPMGPVASQEAIKMLGTNGGGFFNANSSHPFENPTVLTNLAQMLAIFLIPAALCFAFGEAAGDRRQGRALLWAMSFIFVVCVAVVMWAEVQGNPHLLAAGADSSVNMEGKETRFGVLASSLFAVVTTAASCGAVNAMHDSFTALGGMVPMWLMQIGEVVFGGVGSGLYGMLLFVLLAVFIAGLMIGRTPEYLGKKIDVHEMKMTALAILVTPMLVLLGSALAMMTDAGRSAMLNPGPHGFSEVLYAVSSAANNNGSAFAGLSANSPFWNCLLAFCMFVGRFGVIIPVMAIAGSLVSKKVQPASQGTLATHGALFIGLLIGTVLLVGALTFIPALALGPVAEHFSLP</sequence>
<gene>
    <name evidence="1" type="primary">kdpA</name>
    <name type="ordered locus">SNSL254_A0767</name>
</gene>
<dbReference type="EMBL" id="CP001113">
    <property type="protein sequence ID" value="ACF61952.1"/>
    <property type="molecule type" value="Genomic_DNA"/>
</dbReference>
<dbReference type="RefSeq" id="WP_000741171.1">
    <property type="nucleotide sequence ID" value="NZ_CCMR01000003.1"/>
</dbReference>
<dbReference type="SMR" id="B4SZB2"/>
<dbReference type="KEGG" id="see:SNSL254_A0767"/>
<dbReference type="HOGENOM" id="CLU_018614_3_0_6"/>
<dbReference type="Proteomes" id="UP000008824">
    <property type="component" value="Chromosome"/>
</dbReference>
<dbReference type="GO" id="GO:0005886">
    <property type="term" value="C:plasma membrane"/>
    <property type="evidence" value="ECO:0007669"/>
    <property type="project" value="UniProtKB-SubCell"/>
</dbReference>
<dbReference type="GO" id="GO:0008556">
    <property type="term" value="F:P-type potassium transmembrane transporter activity"/>
    <property type="evidence" value="ECO:0007669"/>
    <property type="project" value="InterPro"/>
</dbReference>
<dbReference type="GO" id="GO:0030955">
    <property type="term" value="F:potassium ion binding"/>
    <property type="evidence" value="ECO:0007669"/>
    <property type="project" value="UniProtKB-UniRule"/>
</dbReference>
<dbReference type="HAMAP" id="MF_00275">
    <property type="entry name" value="KdpA"/>
    <property type="match status" value="1"/>
</dbReference>
<dbReference type="InterPro" id="IPR004623">
    <property type="entry name" value="KdpA"/>
</dbReference>
<dbReference type="NCBIfam" id="TIGR00680">
    <property type="entry name" value="kdpA"/>
    <property type="match status" value="1"/>
</dbReference>
<dbReference type="PANTHER" id="PTHR30607">
    <property type="entry name" value="POTASSIUM-TRANSPORTING ATPASE A CHAIN"/>
    <property type="match status" value="1"/>
</dbReference>
<dbReference type="PANTHER" id="PTHR30607:SF2">
    <property type="entry name" value="POTASSIUM-TRANSPORTING ATPASE POTASSIUM-BINDING SUBUNIT"/>
    <property type="match status" value="1"/>
</dbReference>
<dbReference type="Pfam" id="PF03814">
    <property type="entry name" value="KdpA"/>
    <property type="match status" value="1"/>
</dbReference>
<dbReference type="PIRSF" id="PIRSF001294">
    <property type="entry name" value="K_ATPaseA"/>
    <property type="match status" value="1"/>
</dbReference>